<protein>
    <recommendedName>
        <fullName>Diaminobutyrate--2-oxoglutarate transaminase</fullName>
        <ecNumber>2.6.1.76</ecNumber>
    </recommendedName>
    <alternativeName>
        <fullName>DABA aminotransferase</fullName>
    </alternativeName>
    <alternativeName>
        <fullName>Diaminobutyrate--2-oxoglutarate aminotransferase</fullName>
    </alternativeName>
    <alternativeName>
        <fullName>L-2,4-diaminobutyric acid transaminase</fullName>
    </alternativeName>
</protein>
<name>ECTB_SPOPA</name>
<keyword id="KW-0032">Aminotransferase</keyword>
<keyword id="KW-0663">Pyridoxal phosphate</keyword>
<keyword id="KW-0346">Stress response</keyword>
<keyword id="KW-0808">Transferase</keyword>
<evidence type="ECO:0000250" key="1"/>
<evidence type="ECO:0000255" key="2"/>
<evidence type="ECO:0000269" key="3">
    <source>
    </source>
</evidence>
<evidence type="ECO:0000305" key="4"/>
<accession>Q9AP34</accession>
<comment type="function">
    <text evidence="4">Catalyzes reversively the conversion of L-aspartate beta-semialdehyde (ASA) to L-2,4-diaminobutyrate (DABA) by transamination with L-glutamate.</text>
</comment>
<comment type="catalytic activity">
    <reaction>
        <text>L-2,4-diaminobutanoate + 2-oxoglutarate = L-aspartate 4-semialdehyde + L-glutamate</text>
        <dbReference type="Rhea" id="RHEA:11160"/>
        <dbReference type="ChEBI" id="CHEBI:16810"/>
        <dbReference type="ChEBI" id="CHEBI:29985"/>
        <dbReference type="ChEBI" id="CHEBI:58761"/>
        <dbReference type="ChEBI" id="CHEBI:537519"/>
        <dbReference type="EC" id="2.6.1.76"/>
    </reaction>
</comment>
<comment type="cofactor">
    <cofactor evidence="1">
        <name>pyridoxal 5'-phosphate</name>
        <dbReference type="ChEBI" id="CHEBI:597326"/>
    </cofactor>
</comment>
<comment type="pathway">
    <text>Amine and polyamine biosynthesis; ectoine biosynthesis; L-ectoine from L-aspartate 4-semialdehyde: step 1/3.</text>
</comment>
<comment type="induction">
    <text evidence="3">By osmotic stress.</text>
</comment>
<comment type="similarity">
    <text evidence="4">Belongs to the class-III pyridoxal-phosphate-dependent aminotransferase family.</text>
</comment>
<proteinExistence type="evidence at transcript level"/>
<sequence>MLLTKEKNGMEIIEERESAVRSYSRSFPTVFEKAKDHLVWDVDGKEYIDFFAGAGSLNYGHNNEKMKTKIMDYVMNDGISHSLDMGTVARAEFLETFNEVILRPRNLDYKVMFPGPTGTNTVESALKIARKVTGRQNIISFTNAFHGMTLGSLSISGNSSIRNGAGVPLTNTISMPYDTFFKNGNAIDYLEQYLEDTGSGVDLPAAMILETVQGEGGINAASFEWLRGIEKLCRRYDILLIIDDVQAGCGRTGTFFSFEPAGIQPDIVCLSKSIGGYGLPLAITLIKPEHDIWEPGEHNGTFRGNNMAIVAATEALSYWKTDDLAKSVQKKSKIIKLRFEQIVEDYPELKATTRGRGFMQGIACGKGKEAYATKICAKAFEKGVIMETSGPSGEVVKFLGALTIDETSLIKGLGILEEATEEVVRQ</sequence>
<dbReference type="EC" id="2.6.1.76"/>
<dbReference type="EMBL" id="AF316874">
    <property type="protein sequence ID" value="AAK12084.1"/>
    <property type="molecule type" value="Genomic_DNA"/>
</dbReference>
<dbReference type="SMR" id="Q9AP34"/>
<dbReference type="KEGG" id="ag:AAK12084"/>
<dbReference type="UniPathway" id="UPA00067">
    <property type="reaction ID" value="UER00121"/>
</dbReference>
<dbReference type="GO" id="GO:0045303">
    <property type="term" value="F:diaminobutyrate-2-oxoglutarate transaminase activity"/>
    <property type="evidence" value="ECO:0007669"/>
    <property type="project" value="UniProtKB-EC"/>
</dbReference>
<dbReference type="GO" id="GO:0047307">
    <property type="term" value="F:diaminobutyrate-pyruvate transaminase activity"/>
    <property type="evidence" value="ECO:0007669"/>
    <property type="project" value="InterPro"/>
</dbReference>
<dbReference type="GO" id="GO:0030170">
    <property type="term" value="F:pyridoxal phosphate binding"/>
    <property type="evidence" value="ECO:0007669"/>
    <property type="project" value="InterPro"/>
</dbReference>
<dbReference type="GO" id="GO:0019491">
    <property type="term" value="P:ectoine biosynthetic process"/>
    <property type="evidence" value="ECO:0007669"/>
    <property type="project" value="UniProtKB-UniPathway"/>
</dbReference>
<dbReference type="CDD" id="cd00610">
    <property type="entry name" value="OAT_like"/>
    <property type="match status" value="1"/>
</dbReference>
<dbReference type="Gene3D" id="3.90.1150.10">
    <property type="entry name" value="Aspartate Aminotransferase, domain 1"/>
    <property type="match status" value="1"/>
</dbReference>
<dbReference type="Gene3D" id="3.40.640.10">
    <property type="entry name" value="Type I PLP-dependent aspartate aminotransferase-like (Major domain)"/>
    <property type="match status" value="1"/>
</dbReference>
<dbReference type="InterPro" id="IPR005814">
    <property type="entry name" value="Aminotrans_3"/>
</dbReference>
<dbReference type="InterPro" id="IPR049704">
    <property type="entry name" value="Aminotrans_3_PPA_site"/>
</dbReference>
<dbReference type="InterPro" id="IPR004637">
    <property type="entry name" value="Dat"/>
</dbReference>
<dbReference type="InterPro" id="IPR012773">
    <property type="entry name" value="Ectoine_EctB"/>
</dbReference>
<dbReference type="InterPro" id="IPR015424">
    <property type="entry name" value="PyrdxlP-dep_Trfase"/>
</dbReference>
<dbReference type="InterPro" id="IPR015421">
    <property type="entry name" value="PyrdxlP-dep_Trfase_major"/>
</dbReference>
<dbReference type="InterPro" id="IPR015422">
    <property type="entry name" value="PyrdxlP-dep_Trfase_small"/>
</dbReference>
<dbReference type="NCBIfam" id="TIGR00709">
    <property type="entry name" value="dat"/>
    <property type="match status" value="1"/>
</dbReference>
<dbReference type="NCBIfam" id="TIGR02407">
    <property type="entry name" value="ectoine_ectB"/>
    <property type="match status" value="1"/>
</dbReference>
<dbReference type="NCBIfam" id="NF006733">
    <property type="entry name" value="PRK09264.1"/>
    <property type="match status" value="1"/>
</dbReference>
<dbReference type="PANTHER" id="PTHR43552">
    <property type="entry name" value="DIAMINOBUTYRATE--2-OXOGLUTARATE AMINOTRANSFERASE"/>
    <property type="match status" value="1"/>
</dbReference>
<dbReference type="PANTHER" id="PTHR43552:SF2">
    <property type="entry name" value="DIAMINOBUTYRATE--2-OXOGLUTARATE TRANSAMINASE"/>
    <property type="match status" value="1"/>
</dbReference>
<dbReference type="Pfam" id="PF00202">
    <property type="entry name" value="Aminotran_3"/>
    <property type="match status" value="1"/>
</dbReference>
<dbReference type="PIRSF" id="PIRSF000521">
    <property type="entry name" value="Transaminase_4ab_Lys_Orn"/>
    <property type="match status" value="1"/>
</dbReference>
<dbReference type="SUPFAM" id="SSF53383">
    <property type="entry name" value="PLP-dependent transferases"/>
    <property type="match status" value="1"/>
</dbReference>
<dbReference type="PROSITE" id="PS00600">
    <property type="entry name" value="AA_TRANSFER_CLASS_3"/>
    <property type="match status" value="1"/>
</dbReference>
<organism>
    <name type="scientific">Sporosarcina pasteurii</name>
    <name type="common">Bacillus pasteurii</name>
    <dbReference type="NCBI Taxonomy" id="1474"/>
    <lineage>
        <taxon>Bacteria</taxon>
        <taxon>Bacillati</taxon>
        <taxon>Bacillota</taxon>
        <taxon>Bacilli</taxon>
        <taxon>Bacillales</taxon>
        <taxon>Caryophanaceae</taxon>
        <taxon>Sporosarcina</taxon>
    </lineage>
</organism>
<gene>
    <name type="primary">ectB</name>
</gene>
<reference key="1">
    <citation type="journal article" date="2002" name="Appl. Environ. Microbiol.">
        <title>Osmotically regulated synthesis of the compatible solute ectoine in Bacillus pasteurii and related Bacillus spp.</title>
        <authorList>
            <person name="Kuhlmann A.U."/>
            <person name="Bremer E."/>
        </authorList>
    </citation>
    <scope>NUCLEOTIDE SEQUENCE [GENOMIC DNA]</scope>
    <scope>TRANSCRIPTIONAL REGULATION</scope>
    <source>
        <strain>ATCC 11859 / DSM 33 / NCIB 8841 / NCTC 4822</strain>
    </source>
</reference>
<feature type="chain" id="PRO_0000120518" description="Diaminobutyrate--2-oxoglutarate transaminase">
    <location>
        <begin position="1"/>
        <end position="426"/>
    </location>
</feature>
<feature type="modified residue" description="N6-(pyridoxal phosphate)lysine" evidence="2">
    <location>
        <position position="272"/>
    </location>
</feature>